<protein>
    <recommendedName>
        <fullName>Cytochrome c5</fullName>
    </recommendedName>
</protein>
<accession>P00121</accession>
<proteinExistence type="evidence at protein level"/>
<comment type="function">
    <text>It is unreactive with cytochrome c reductase or oxidase but seems to function as an intermediate in nitrate respiration of facultative anaerobic pseudmonads.</text>
</comment>
<comment type="subunit">
    <text>Homodimer.</text>
</comment>
<comment type="PTM">
    <text>Binds 1 heme group per subunit.</text>
</comment>
<comment type="similarity">
    <text evidence="2">Belongs to the cytochrome c family.</text>
</comment>
<name>CYC5_ECTME</name>
<organism>
    <name type="scientific">Ectopseudomonas mendocina</name>
    <name type="common">Pseudomonas mendocina</name>
    <dbReference type="NCBI Taxonomy" id="300"/>
    <lineage>
        <taxon>Bacteria</taxon>
        <taxon>Pseudomonadati</taxon>
        <taxon>Pseudomonadota</taxon>
        <taxon>Gammaproteobacteria</taxon>
        <taxon>Pseudomonadales</taxon>
        <taxon>Pseudomonadaceae</taxon>
        <taxon>Ectopseudomonas</taxon>
    </lineage>
</organism>
<sequence>AASAGGGARSADDIIAKHCNACHGAGVLGAPKIGDTAAWKERADHQGGLDGILAKAISGINAMPPKGTCADCSDDELREAIQKMSGL</sequence>
<evidence type="ECO:0000250" key="1"/>
<evidence type="ECO:0000305" key="2"/>
<reference key="1">
    <citation type="journal article" date="1973" name="Biochem. Soc. Trans.">
        <title>Amino acid sequence of cytochrome c-5 from Pseudomonas mendocina.</title>
        <authorList>
            <person name="Ambler R.P."/>
            <person name="Taylor E."/>
        </authorList>
    </citation>
    <scope>PROTEIN SEQUENCE</scope>
    <source>
        <strain>CH110</strain>
    </source>
</reference>
<dbReference type="PIR" id="A00114">
    <property type="entry name" value="CCPSVM"/>
</dbReference>
<dbReference type="SMR" id="P00121"/>
<dbReference type="STRING" id="1001585.MDS_0305"/>
<dbReference type="GO" id="GO:0009055">
    <property type="term" value="F:electron transfer activity"/>
    <property type="evidence" value="ECO:0007669"/>
    <property type="project" value="InterPro"/>
</dbReference>
<dbReference type="GO" id="GO:0020037">
    <property type="term" value="F:heme binding"/>
    <property type="evidence" value="ECO:0007669"/>
    <property type="project" value="InterPro"/>
</dbReference>
<dbReference type="GO" id="GO:0005506">
    <property type="term" value="F:iron ion binding"/>
    <property type="evidence" value="ECO:0007669"/>
    <property type="project" value="InterPro"/>
</dbReference>
<dbReference type="Gene3D" id="1.10.760.10">
    <property type="entry name" value="Cytochrome c-like domain"/>
    <property type="match status" value="1"/>
</dbReference>
<dbReference type="InterPro" id="IPR009056">
    <property type="entry name" value="Cyt_c-like_dom"/>
</dbReference>
<dbReference type="InterPro" id="IPR036909">
    <property type="entry name" value="Cyt_c-like_dom_sf"/>
</dbReference>
<dbReference type="InterPro" id="IPR002323">
    <property type="entry name" value="Cyt_CIE"/>
</dbReference>
<dbReference type="PANTHER" id="PTHR40942">
    <property type="match status" value="1"/>
</dbReference>
<dbReference type="PANTHER" id="PTHR40942:SF4">
    <property type="entry name" value="CYTOCHROME C5"/>
    <property type="match status" value="1"/>
</dbReference>
<dbReference type="Pfam" id="PF13442">
    <property type="entry name" value="Cytochrome_CBB3"/>
    <property type="match status" value="1"/>
</dbReference>
<dbReference type="PRINTS" id="PR00607">
    <property type="entry name" value="CYTCHROMECIE"/>
</dbReference>
<dbReference type="SUPFAM" id="SSF46626">
    <property type="entry name" value="Cytochrome c"/>
    <property type="match status" value="1"/>
</dbReference>
<keyword id="KW-0903">Direct protein sequencing</keyword>
<keyword id="KW-1015">Disulfide bond</keyword>
<keyword id="KW-0249">Electron transport</keyword>
<keyword id="KW-0349">Heme</keyword>
<keyword id="KW-0408">Iron</keyword>
<keyword id="KW-0479">Metal-binding</keyword>
<keyword id="KW-0813">Transport</keyword>
<feature type="chain" id="PRO_0000108367" description="Cytochrome c5">
    <location>
        <begin position="1"/>
        <end position="87"/>
    </location>
</feature>
<feature type="binding site" description="covalent">
    <location>
        <position position="19"/>
    </location>
    <ligand>
        <name>heme</name>
        <dbReference type="ChEBI" id="CHEBI:30413"/>
    </ligand>
</feature>
<feature type="binding site" description="covalent">
    <location>
        <position position="22"/>
    </location>
    <ligand>
        <name>heme</name>
        <dbReference type="ChEBI" id="CHEBI:30413"/>
    </ligand>
</feature>
<feature type="binding site" description="axial binding residue">
    <location>
        <position position="23"/>
    </location>
    <ligand>
        <name>heme</name>
        <dbReference type="ChEBI" id="CHEBI:30413"/>
    </ligand>
    <ligandPart>
        <name>Fe</name>
        <dbReference type="ChEBI" id="CHEBI:18248"/>
    </ligandPart>
</feature>
<feature type="binding site" description="axial binding residue">
    <location>
        <position position="63"/>
    </location>
    <ligand>
        <name>heme</name>
        <dbReference type="ChEBI" id="CHEBI:30413"/>
    </ligand>
    <ligandPart>
        <name>Fe</name>
        <dbReference type="ChEBI" id="CHEBI:18248"/>
    </ligandPart>
</feature>
<feature type="disulfide bond" evidence="1">
    <location>
        <begin position="69"/>
        <end position="72"/>
    </location>
</feature>